<organism evidence="14">
    <name type="scientific">Drosophila melanogaster</name>
    <name type="common">Fruit fly</name>
    <dbReference type="NCBI Taxonomy" id="7227"/>
    <lineage>
        <taxon>Eukaryota</taxon>
        <taxon>Metazoa</taxon>
        <taxon>Ecdysozoa</taxon>
        <taxon>Arthropoda</taxon>
        <taxon>Hexapoda</taxon>
        <taxon>Insecta</taxon>
        <taxon>Pterygota</taxon>
        <taxon>Neoptera</taxon>
        <taxon>Endopterygota</taxon>
        <taxon>Diptera</taxon>
        <taxon>Brachycera</taxon>
        <taxon>Muscomorpha</taxon>
        <taxon>Ephydroidea</taxon>
        <taxon>Drosophilidae</taxon>
        <taxon>Drosophila</taxon>
        <taxon>Sophophora</taxon>
    </lineage>
</organism>
<evidence type="ECO:0000250" key="1">
    <source>
        <dbReference type="UniProtKB" id="Q56224"/>
    </source>
</evidence>
<evidence type="ECO:0000255" key="2"/>
<evidence type="ECO:0000255" key="3">
    <source>
        <dbReference type="PROSITE-ProRule" id="PRU00711"/>
    </source>
</evidence>
<evidence type="ECO:0000269" key="4">
    <source>
    </source>
</evidence>
<evidence type="ECO:0000269" key="5">
    <source>
    </source>
</evidence>
<evidence type="ECO:0000269" key="6">
    <source>
    </source>
</evidence>
<evidence type="ECO:0000303" key="7">
    <source>
    </source>
</evidence>
<evidence type="ECO:0000303" key="8">
    <source>
    </source>
</evidence>
<evidence type="ECO:0000305" key="9"/>
<evidence type="ECO:0000305" key="10">
    <source>
    </source>
</evidence>
<evidence type="ECO:0000312" key="11">
    <source>
        <dbReference type="EMBL" id="AAF55234.1"/>
    </source>
</evidence>
<evidence type="ECO:0000312" key="12">
    <source>
        <dbReference type="EMBL" id="AAL48541.1"/>
    </source>
</evidence>
<evidence type="ECO:0000312" key="13">
    <source>
        <dbReference type="FlyBase" id="FBgn0017567"/>
    </source>
</evidence>
<evidence type="ECO:0000312" key="14">
    <source>
        <dbReference type="Proteomes" id="UP000000803"/>
    </source>
</evidence>
<evidence type="ECO:0007829" key="15">
    <source>
        <dbReference type="PDB" id="8B9Z"/>
    </source>
</evidence>
<feature type="transit peptide" description="Mitochondrion" evidence="2">
    <location>
        <begin position="1"/>
        <end position="26"/>
    </location>
</feature>
<feature type="chain" id="PRO_0000450675" description="NADH dehydrogenase (ubiquinone) 23 kDa subunit" evidence="2">
    <location>
        <begin position="27"/>
        <end position="217"/>
    </location>
</feature>
<feature type="domain" description="4Fe-4S ferredoxin-type 1" evidence="3">
    <location>
        <begin position="109"/>
        <end position="138"/>
    </location>
</feature>
<feature type="domain" description="4Fe-4S ferredoxin-type 2" evidence="3">
    <location>
        <begin position="148"/>
        <end position="177"/>
    </location>
</feature>
<feature type="binding site" evidence="3">
    <location>
        <position position="118"/>
    </location>
    <ligand>
        <name>[4Fe-4S] cluster</name>
        <dbReference type="ChEBI" id="CHEBI:49883"/>
        <label>1</label>
    </ligand>
</feature>
<feature type="binding site" evidence="3">
    <location>
        <position position="121"/>
    </location>
    <ligand>
        <name>[4Fe-4S] cluster</name>
        <dbReference type="ChEBI" id="CHEBI:49883"/>
        <label>1</label>
    </ligand>
</feature>
<feature type="binding site" evidence="3">
    <location>
        <position position="124"/>
    </location>
    <ligand>
        <name>[4Fe-4S] cluster</name>
        <dbReference type="ChEBI" id="CHEBI:49883"/>
        <label>1</label>
    </ligand>
</feature>
<feature type="binding site" evidence="3">
    <location>
        <position position="128"/>
    </location>
    <ligand>
        <name>[4Fe-4S] cluster</name>
        <dbReference type="ChEBI" id="CHEBI:49883"/>
        <label>1</label>
    </ligand>
</feature>
<feature type="binding site" evidence="3">
    <location>
        <position position="157"/>
    </location>
    <ligand>
        <name>[4Fe-4S] cluster</name>
        <dbReference type="ChEBI" id="CHEBI:49883"/>
        <label>2</label>
    </ligand>
</feature>
<feature type="binding site" evidence="3">
    <location>
        <position position="160"/>
    </location>
    <ligand>
        <name>[4Fe-4S] cluster</name>
        <dbReference type="ChEBI" id="CHEBI:49883"/>
        <label>2</label>
    </ligand>
</feature>
<feature type="binding site" evidence="3">
    <location>
        <position position="163"/>
    </location>
    <ligand>
        <name>[4Fe-4S] cluster</name>
        <dbReference type="ChEBI" id="CHEBI:49883"/>
        <label>2</label>
    </ligand>
</feature>
<feature type="binding site" evidence="3">
    <location>
        <position position="167"/>
    </location>
    <ligand>
        <name>[4Fe-4S] cluster</name>
        <dbReference type="ChEBI" id="CHEBI:49883"/>
        <label>2</label>
    </ligand>
</feature>
<feature type="mutagenesis site" description="Disrupts mitochondrial function and results in enlarged mitochondria. Neurons present vacuolar lesions leading to neurodegeneration in the central brain. Results in behavioral defects and shorten lifespan." evidence="6">
    <original>G</original>
    <variation>D</variation>
    <location>
        <position position="199"/>
    </location>
</feature>
<feature type="sequence conflict" description="In Ref. 3; AAL48541." evidence="9" ref="3">
    <original>D</original>
    <variation>G</variation>
    <location>
        <position position="170"/>
    </location>
</feature>
<feature type="strand" evidence="15">
    <location>
        <begin position="35"/>
        <end position="37"/>
    </location>
</feature>
<feature type="strand" evidence="15">
    <location>
        <begin position="44"/>
        <end position="47"/>
    </location>
</feature>
<feature type="helix" evidence="15">
    <location>
        <begin position="55"/>
        <end position="67"/>
    </location>
</feature>
<feature type="helix" evidence="15">
    <location>
        <begin position="69"/>
        <end position="80"/>
    </location>
</feature>
<feature type="helix" evidence="15">
    <location>
        <begin position="81"/>
        <end position="83"/>
    </location>
</feature>
<feature type="turn" evidence="15">
    <location>
        <begin position="91"/>
        <end position="93"/>
    </location>
</feature>
<feature type="strand" evidence="15">
    <location>
        <begin position="105"/>
        <end position="108"/>
    </location>
</feature>
<feature type="helix" evidence="15">
    <location>
        <begin position="123"/>
        <end position="127"/>
    </location>
</feature>
<feature type="strand" evidence="15">
    <location>
        <begin position="133"/>
        <end position="139"/>
    </location>
</feature>
<feature type="strand" evidence="15">
    <location>
        <begin position="145"/>
        <end position="153"/>
    </location>
</feature>
<feature type="turn" evidence="15">
    <location>
        <begin position="154"/>
        <end position="156"/>
    </location>
</feature>
<feature type="helix" evidence="15">
    <location>
        <begin position="162"/>
        <end position="166"/>
    </location>
</feature>
<feature type="strand" evidence="15">
    <location>
        <begin position="172"/>
        <end position="174"/>
    </location>
</feature>
<feature type="strand" evidence="15">
    <location>
        <begin position="182"/>
        <end position="185"/>
    </location>
</feature>
<feature type="helix" evidence="15">
    <location>
        <begin position="186"/>
        <end position="188"/>
    </location>
</feature>
<feature type="helix" evidence="15">
    <location>
        <begin position="192"/>
        <end position="201"/>
    </location>
</feature>
<feature type="helix" evidence="15">
    <location>
        <begin position="203"/>
        <end position="213"/>
    </location>
</feature>
<feature type="turn" evidence="15">
    <location>
        <begin position="214"/>
        <end position="216"/>
    </location>
</feature>
<reference evidence="14" key="1">
    <citation type="journal article" date="2000" name="Science">
        <title>The genome sequence of Drosophila melanogaster.</title>
        <authorList>
            <person name="Adams M.D."/>
            <person name="Celniker S.E."/>
            <person name="Holt R.A."/>
            <person name="Evans C.A."/>
            <person name="Gocayne J.D."/>
            <person name="Amanatides P.G."/>
            <person name="Scherer S.E."/>
            <person name="Li P.W."/>
            <person name="Hoskins R.A."/>
            <person name="Galle R.F."/>
            <person name="George R.A."/>
            <person name="Lewis S.E."/>
            <person name="Richards S."/>
            <person name="Ashburner M."/>
            <person name="Henderson S.N."/>
            <person name="Sutton G.G."/>
            <person name="Wortman J.R."/>
            <person name="Yandell M.D."/>
            <person name="Zhang Q."/>
            <person name="Chen L.X."/>
            <person name="Brandon R.C."/>
            <person name="Rogers Y.-H.C."/>
            <person name="Blazej R.G."/>
            <person name="Champe M."/>
            <person name="Pfeiffer B.D."/>
            <person name="Wan K.H."/>
            <person name="Doyle C."/>
            <person name="Baxter E.G."/>
            <person name="Helt G."/>
            <person name="Nelson C.R."/>
            <person name="Miklos G.L.G."/>
            <person name="Abril J.F."/>
            <person name="Agbayani A."/>
            <person name="An H.-J."/>
            <person name="Andrews-Pfannkoch C."/>
            <person name="Baldwin D."/>
            <person name="Ballew R.M."/>
            <person name="Basu A."/>
            <person name="Baxendale J."/>
            <person name="Bayraktaroglu L."/>
            <person name="Beasley E.M."/>
            <person name="Beeson K.Y."/>
            <person name="Benos P.V."/>
            <person name="Berman B.P."/>
            <person name="Bhandari D."/>
            <person name="Bolshakov S."/>
            <person name="Borkova D."/>
            <person name="Botchan M.R."/>
            <person name="Bouck J."/>
            <person name="Brokstein P."/>
            <person name="Brottier P."/>
            <person name="Burtis K.C."/>
            <person name="Busam D.A."/>
            <person name="Butler H."/>
            <person name="Cadieu E."/>
            <person name="Center A."/>
            <person name="Chandra I."/>
            <person name="Cherry J.M."/>
            <person name="Cawley S."/>
            <person name="Dahlke C."/>
            <person name="Davenport L.B."/>
            <person name="Davies P."/>
            <person name="de Pablos B."/>
            <person name="Delcher A."/>
            <person name="Deng Z."/>
            <person name="Mays A.D."/>
            <person name="Dew I."/>
            <person name="Dietz S.M."/>
            <person name="Dodson K."/>
            <person name="Doup L.E."/>
            <person name="Downes M."/>
            <person name="Dugan-Rocha S."/>
            <person name="Dunkov B.C."/>
            <person name="Dunn P."/>
            <person name="Durbin K.J."/>
            <person name="Evangelista C.C."/>
            <person name="Ferraz C."/>
            <person name="Ferriera S."/>
            <person name="Fleischmann W."/>
            <person name="Fosler C."/>
            <person name="Gabrielian A.E."/>
            <person name="Garg N.S."/>
            <person name="Gelbart W.M."/>
            <person name="Glasser K."/>
            <person name="Glodek A."/>
            <person name="Gong F."/>
            <person name="Gorrell J.H."/>
            <person name="Gu Z."/>
            <person name="Guan P."/>
            <person name="Harris M."/>
            <person name="Harris N.L."/>
            <person name="Harvey D.A."/>
            <person name="Heiman T.J."/>
            <person name="Hernandez J.R."/>
            <person name="Houck J."/>
            <person name="Hostin D."/>
            <person name="Houston K.A."/>
            <person name="Howland T.J."/>
            <person name="Wei M.-H."/>
            <person name="Ibegwam C."/>
            <person name="Jalali M."/>
            <person name="Kalush F."/>
            <person name="Karpen G.H."/>
            <person name="Ke Z."/>
            <person name="Kennison J.A."/>
            <person name="Ketchum K.A."/>
            <person name="Kimmel B.E."/>
            <person name="Kodira C.D."/>
            <person name="Kraft C.L."/>
            <person name="Kravitz S."/>
            <person name="Kulp D."/>
            <person name="Lai Z."/>
            <person name="Lasko P."/>
            <person name="Lei Y."/>
            <person name="Levitsky A.A."/>
            <person name="Li J.H."/>
            <person name="Li Z."/>
            <person name="Liang Y."/>
            <person name="Lin X."/>
            <person name="Liu X."/>
            <person name="Mattei B."/>
            <person name="McIntosh T.C."/>
            <person name="McLeod M.P."/>
            <person name="McPherson D."/>
            <person name="Merkulov G."/>
            <person name="Milshina N.V."/>
            <person name="Mobarry C."/>
            <person name="Morris J."/>
            <person name="Moshrefi A."/>
            <person name="Mount S.M."/>
            <person name="Moy M."/>
            <person name="Murphy B."/>
            <person name="Murphy L."/>
            <person name="Muzny D.M."/>
            <person name="Nelson D.L."/>
            <person name="Nelson D.R."/>
            <person name="Nelson K.A."/>
            <person name="Nixon K."/>
            <person name="Nusskern D.R."/>
            <person name="Pacleb J.M."/>
            <person name="Palazzolo M."/>
            <person name="Pittman G.S."/>
            <person name="Pan S."/>
            <person name="Pollard J."/>
            <person name="Puri V."/>
            <person name="Reese M.G."/>
            <person name="Reinert K."/>
            <person name="Remington K."/>
            <person name="Saunders R.D.C."/>
            <person name="Scheeler F."/>
            <person name="Shen H."/>
            <person name="Shue B.C."/>
            <person name="Siden-Kiamos I."/>
            <person name="Simpson M."/>
            <person name="Skupski M.P."/>
            <person name="Smith T.J."/>
            <person name="Spier E."/>
            <person name="Spradling A.C."/>
            <person name="Stapleton M."/>
            <person name="Strong R."/>
            <person name="Sun E."/>
            <person name="Svirskas R."/>
            <person name="Tector C."/>
            <person name="Turner R."/>
            <person name="Venter E."/>
            <person name="Wang A.H."/>
            <person name="Wang X."/>
            <person name="Wang Z.-Y."/>
            <person name="Wassarman D.A."/>
            <person name="Weinstock G.M."/>
            <person name="Weissenbach J."/>
            <person name="Williams S.M."/>
            <person name="Woodage T."/>
            <person name="Worley K.C."/>
            <person name="Wu D."/>
            <person name="Yang S."/>
            <person name="Yao Q.A."/>
            <person name="Ye J."/>
            <person name="Yeh R.-F."/>
            <person name="Zaveri J.S."/>
            <person name="Zhan M."/>
            <person name="Zhang G."/>
            <person name="Zhao Q."/>
            <person name="Zheng L."/>
            <person name="Zheng X.H."/>
            <person name="Zhong F.N."/>
            <person name="Zhong W."/>
            <person name="Zhou X."/>
            <person name="Zhu S.C."/>
            <person name="Zhu X."/>
            <person name="Smith H.O."/>
            <person name="Gibbs R.A."/>
            <person name="Myers E.W."/>
            <person name="Rubin G.M."/>
            <person name="Venter J.C."/>
        </authorList>
    </citation>
    <scope>NUCLEOTIDE SEQUENCE [LARGE SCALE GENOMIC DNA]</scope>
    <source>
        <strain evidence="14">Berkeley</strain>
    </source>
</reference>
<reference evidence="14" key="2">
    <citation type="journal article" date="2002" name="Genome Biol.">
        <title>Annotation of the Drosophila melanogaster euchromatic genome: a systematic review.</title>
        <authorList>
            <person name="Misra S."/>
            <person name="Crosby M.A."/>
            <person name="Mungall C.J."/>
            <person name="Matthews B.B."/>
            <person name="Campbell K.S."/>
            <person name="Hradecky P."/>
            <person name="Huang Y."/>
            <person name="Kaminker J.S."/>
            <person name="Millburn G.H."/>
            <person name="Prochnik S.E."/>
            <person name="Smith C.D."/>
            <person name="Tupy J.L."/>
            <person name="Whitfield E.J."/>
            <person name="Bayraktaroglu L."/>
            <person name="Berman B.P."/>
            <person name="Bettencourt B.R."/>
            <person name="Celniker S.E."/>
            <person name="de Grey A.D.N.J."/>
            <person name="Drysdale R.A."/>
            <person name="Harris N.L."/>
            <person name="Richter J."/>
            <person name="Russo S."/>
            <person name="Schroeder A.J."/>
            <person name="Shu S.Q."/>
            <person name="Stapleton M."/>
            <person name="Yamada C."/>
            <person name="Ashburner M."/>
            <person name="Gelbart W.M."/>
            <person name="Rubin G.M."/>
            <person name="Lewis S.E."/>
        </authorList>
    </citation>
    <scope>GENOME REANNOTATION</scope>
    <source>
        <strain evidence="14">Berkeley</strain>
    </source>
</reference>
<reference evidence="12" key="3">
    <citation type="journal article" date="2002" name="Genome Biol.">
        <title>A Drosophila full-length cDNA resource.</title>
        <authorList>
            <person name="Stapleton M."/>
            <person name="Carlson J.W."/>
            <person name="Brokstein P."/>
            <person name="Yu C."/>
            <person name="Champe M."/>
            <person name="George R.A."/>
            <person name="Guarin H."/>
            <person name="Kronmiller B."/>
            <person name="Pacleb J.M."/>
            <person name="Park S."/>
            <person name="Wan K.H."/>
            <person name="Rubin G.M."/>
            <person name="Celniker S.E."/>
        </authorList>
    </citation>
    <scope>NUCLEOTIDE SEQUENCE [LARGE SCALE MRNA]</scope>
    <source>
        <strain evidence="12">Berkeley</strain>
        <tissue evidence="12">Embryo</tissue>
    </source>
</reference>
<reference evidence="9" key="4">
    <citation type="journal article" date="2017" name="Cell Rep.">
        <title>Regulation of Mitochondrial Complex I Biogenesis in Drosophila Flight Muscles.</title>
        <authorList>
            <person name="Garcia C.J."/>
            <person name="Khajeh J."/>
            <person name="Coulanges E."/>
            <person name="Chen E.I."/>
            <person name="Owusu-Ansah E."/>
        </authorList>
    </citation>
    <scope>IDENTIFICATION BY MASS SPECTROMETRY</scope>
    <scope>FUNCTION</scope>
    <scope>IDENTIFICATION IN THE NADH-UBIQUINONE OXIDOREDUCTASE COMPLEX</scope>
    <scope>SUBCELLULAR LOCATION</scope>
    <scope>TISSUE SPECIFICITY</scope>
    <scope>DISRUPTION PHENOTYPE</scope>
</reference>
<reference evidence="9" key="5">
    <citation type="journal article" date="2018" name="Genetics">
        <title>Mito-Nuclear Interactions Affecting Lifespan and Neurodegeneration in a Drosophila Model of Leigh Syndrome.</title>
        <authorList>
            <person name="Loewen C.A."/>
            <person name="Ganetzky B."/>
        </authorList>
    </citation>
    <scope>MUTAGENESIS OF GLY-199</scope>
</reference>
<reference evidence="9" key="6">
    <citation type="journal article" date="2018" name="Glia">
        <title>Glial lipid droplets and neurodegeneration in a Drosophila model of complex I deficiency.</title>
        <authorList>
            <person name="Cabirol-Pol M.J."/>
            <person name="Khalil B."/>
            <person name="Rival T."/>
            <person name="Faivre-Sarrailh C."/>
            <person name="Besson M.T."/>
        </authorList>
    </citation>
    <scope>DISRUPTION PHENOTYPE</scope>
</reference>
<comment type="function">
    <text evidence="10">Core subunit of the mitochondrial membrane respiratory chain NADH dehydrogenase (Complex I) that is believed to belong to the minimal assembly required for catalysis. Complex I functions in the transfer of electrons from NADH to the respiratory chain. The immediate electron acceptor for the enzyme is believed to be ubiquinone.</text>
</comment>
<comment type="catalytic activity">
    <reaction evidence="1">
        <text>a ubiquinone + NADH + 5 H(+)(in) = a ubiquinol + NAD(+) + 4 H(+)(out)</text>
        <dbReference type="Rhea" id="RHEA:29091"/>
        <dbReference type="Rhea" id="RHEA-COMP:9565"/>
        <dbReference type="Rhea" id="RHEA-COMP:9566"/>
        <dbReference type="ChEBI" id="CHEBI:15378"/>
        <dbReference type="ChEBI" id="CHEBI:16389"/>
        <dbReference type="ChEBI" id="CHEBI:17976"/>
        <dbReference type="ChEBI" id="CHEBI:57540"/>
        <dbReference type="ChEBI" id="CHEBI:57945"/>
        <dbReference type="EC" id="7.1.1.2"/>
    </reaction>
</comment>
<comment type="cofactor">
    <cofactor evidence="1">
        <name>[4Fe-4S] cluster</name>
        <dbReference type="ChEBI" id="CHEBI:49883"/>
    </cofactor>
    <text evidence="1">Binds 2 [4Fe-4S] cluster.</text>
</comment>
<comment type="subunit">
    <text evidence="4">Part of the mitochondrial membrane respiratory chain NADH dehydrogenase (Complex I) (PubMed:28683319). This is a component of the iron-sulfur (IP) fragment of the enzyme (PubMed:28683319).</text>
</comment>
<comment type="subcellular location">
    <subcellularLocation>
        <location evidence="4">Mitochondrion</location>
    </subcellularLocation>
</comment>
<comment type="tissue specificity">
    <text evidence="4">Expressed in muscles (at protein level).</text>
</comment>
<comment type="disruption phenotype">
    <text evidence="4 5">RNAi-mediated knockdown is lethal (PubMed:29285794). RNAi-mediated knockdown in the muscles impairs biogenesis of the mitochondrial membrane respiratory chain NADH dehydrogenase (Complex I) (PubMed:28683319). RNAi-mediated knockdown in neurons impairs neuronal ATP production, reduces locomotor activity and shortens lifespan (PubMed:29285794). In addition, results in large vacuoles in the retina, ommatidia disorganization and selective axonal alterations in mushroom bodies (PubMed:29285794). RNAi-mediated knockdown in glia results in large vacuoles and lipid droplets in both cortical region of the brain and optic lobes suggesting altered lipid metabolism; does not alter lifespan or behavior (PubMed:29285794).</text>
</comment>
<comment type="similarity">
    <text evidence="9">Belongs to the complex I 23 kDa subunit family.</text>
</comment>
<dbReference type="EC" id="7.1.1.2" evidence="1"/>
<dbReference type="EMBL" id="AE014297">
    <property type="protein sequence ID" value="AAF55234.1"/>
    <property type="molecule type" value="Genomic_DNA"/>
</dbReference>
<dbReference type="EMBL" id="AY060840">
    <property type="protein sequence ID" value="AAL28388.1"/>
    <property type="molecule type" value="mRNA"/>
</dbReference>
<dbReference type="EMBL" id="AY070919">
    <property type="protein sequence ID" value="AAL48541.1"/>
    <property type="molecule type" value="mRNA"/>
</dbReference>
<dbReference type="RefSeq" id="NP_524719.1">
    <property type="nucleotide sequence ID" value="NM_079980.4"/>
</dbReference>
<dbReference type="PDB" id="8B9Z">
    <property type="method" value="EM"/>
    <property type="resolution" value="3.28 A"/>
    <property type="chains" value="I=32-217"/>
</dbReference>
<dbReference type="PDB" id="8BA0">
    <property type="method" value="EM"/>
    <property type="resolution" value="3.68 A"/>
    <property type="chains" value="I=32-217"/>
</dbReference>
<dbReference type="PDB" id="8ESW">
    <property type="method" value="EM"/>
    <property type="resolution" value="3.30 A"/>
    <property type="chains" value="S8=1-217"/>
</dbReference>
<dbReference type="PDB" id="8ESZ">
    <property type="method" value="EM"/>
    <property type="resolution" value="3.40 A"/>
    <property type="chains" value="S8=1-217"/>
</dbReference>
<dbReference type="PDBsum" id="8B9Z"/>
<dbReference type="PDBsum" id="8BA0"/>
<dbReference type="PDBsum" id="8ESW"/>
<dbReference type="PDBsum" id="8ESZ"/>
<dbReference type="EMDB" id="EMD-15936"/>
<dbReference type="EMDB" id="EMD-15937"/>
<dbReference type="EMDB" id="EMD-28581"/>
<dbReference type="EMDB" id="EMD-28582"/>
<dbReference type="SMR" id="Q9VF27"/>
<dbReference type="ComplexPortal" id="CPX-8628">
    <property type="entry name" value="Mitochondrial respiratory chain complex I"/>
</dbReference>
<dbReference type="ComplexPortal" id="CPX-8638">
    <property type="entry name" value="Mitochondrial respiratory chain complex I, testis-specific variant"/>
</dbReference>
<dbReference type="FunCoup" id="Q9VF27">
    <property type="interactions" value="1511"/>
</dbReference>
<dbReference type="IntAct" id="Q9VF27">
    <property type="interactions" value="1"/>
</dbReference>
<dbReference type="STRING" id="7227.FBpp0082645"/>
<dbReference type="PaxDb" id="7227-FBpp0082645"/>
<dbReference type="DNASU" id="44207"/>
<dbReference type="EnsemblMetazoa" id="FBtr0083191">
    <property type="protein sequence ID" value="FBpp0082645"/>
    <property type="gene ID" value="FBgn0017567"/>
</dbReference>
<dbReference type="GeneID" id="44207"/>
<dbReference type="KEGG" id="dme:Dmel_CG3944"/>
<dbReference type="UCSC" id="CG3944-RA">
    <property type="organism name" value="d. melanogaster"/>
</dbReference>
<dbReference type="AGR" id="FB:FBgn0017567"/>
<dbReference type="CTD" id="44207"/>
<dbReference type="FlyBase" id="FBgn0017567">
    <property type="gene designation" value="ND-23"/>
</dbReference>
<dbReference type="VEuPathDB" id="VectorBase:FBgn0017567"/>
<dbReference type="eggNOG" id="KOG3256">
    <property type="taxonomic scope" value="Eukaryota"/>
</dbReference>
<dbReference type="GeneTree" id="ENSGT00390000003049"/>
<dbReference type="HOGENOM" id="CLU_067218_5_1_1"/>
<dbReference type="InParanoid" id="Q9VF27"/>
<dbReference type="OMA" id="WYPDFFR"/>
<dbReference type="OrthoDB" id="204405at2759"/>
<dbReference type="PhylomeDB" id="Q9VF27"/>
<dbReference type="Reactome" id="R-DME-611105">
    <property type="pathway name" value="Respiratory electron transport"/>
</dbReference>
<dbReference type="Reactome" id="R-DME-6799198">
    <property type="pathway name" value="Complex I biogenesis"/>
</dbReference>
<dbReference type="SignaLink" id="Q9VF27"/>
<dbReference type="BioGRID-ORCS" id="44207">
    <property type="hits" value="0 hits in 1 CRISPR screen"/>
</dbReference>
<dbReference type="ChiTaRS" id="N">
    <property type="organism name" value="fly"/>
</dbReference>
<dbReference type="GenomeRNAi" id="44207"/>
<dbReference type="PRO" id="PR:Q9VF27"/>
<dbReference type="Proteomes" id="UP000000803">
    <property type="component" value="Chromosome 3R"/>
</dbReference>
<dbReference type="Bgee" id="FBgn0017567">
    <property type="expression patterns" value="Expressed in dorsal cluster neuron (Drosophila) in brain and 211 other cell types or tissues"/>
</dbReference>
<dbReference type="GO" id="GO:0005743">
    <property type="term" value="C:mitochondrial inner membrane"/>
    <property type="evidence" value="ECO:0000305"/>
    <property type="project" value="FlyBase"/>
</dbReference>
<dbReference type="GO" id="GO:0005739">
    <property type="term" value="C:mitochondrion"/>
    <property type="evidence" value="ECO:0007005"/>
    <property type="project" value="FlyBase"/>
</dbReference>
<dbReference type="GO" id="GO:0045271">
    <property type="term" value="C:respiratory chain complex I"/>
    <property type="evidence" value="ECO:0000314"/>
    <property type="project" value="FlyBase"/>
</dbReference>
<dbReference type="GO" id="GO:0051539">
    <property type="term" value="F:4 iron, 4 sulfur cluster binding"/>
    <property type="evidence" value="ECO:0007669"/>
    <property type="project" value="UniProtKB-KW"/>
</dbReference>
<dbReference type="GO" id="GO:0046872">
    <property type="term" value="F:metal ion binding"/>
    <property type="evidence" value="ECO:0007669"/>
    <property type="project" value="UniProtKB-KW"/>
</dbReference>
<dbReference type="GO" id="GO:0008137">
    <property type="term" value="F:NADH dehydrogenase (ubiquinone) activity"/>
    <property type="evidence" value="ECO:0007669"/>
    <property type="project" value="UniProtKB-EC"/>
</dbReference>
<dbReference type="GO" id="GO:0042775">
    <property type="term" value="P:mitochondrial ATP synthesis coupled electron transport"/>
    <property type="evidence" value="ECO:0000315"/>
    <property type="project" value="UniProtKB"/>
</dbReference>
<dbReference type="GO" id="GO:0006120">
    <property type="term" value="P:mitochondrial electron transport, NADH to ubiquinone"/>
    <property type="evidence" value="ECO:0000318"/>
    <property type="project" value="GO_Central"/>
</dbReference>
<dbReference type="GO" id="GO:0032981">
    <property type="term" value="P:mitochondrial respiratory chain complex I assembly"/>
    <property type="evidence" value="ECO:0000318"/>
    <property type="project" value="GO_Central"/>
</dbReference>
<dbReference type="FunFam" id="3.30.70.3270:FF:000001">
    <property type="entry name" value="NADH-quinone oxidoreductase subunit I 1"/>
    <property type="match status" value="1"/>
</dbReference>
<dbReference type="Gene3D" id="3.30.70.3270">
    <property type="match status" value="1"/>
</dbReference>
<dbReference type="HAMAP" id="MF_01351">
    <property type="entry name" value="NDH1_NuoI"/>
    <property type="match status" value="1"/>
</dbReference>
<dbReference type="InterPro" id="IPR017896">
    <property type="entry name" value="4Fe4S_Fe-S-bd"/>
</dbReference>
<dbReference type="InterPro" id="IPR017900">
    <property type="entry name" value="4Fe4S_Fe_S_CS"/>
</dbReference>
<dbReference type="InterPro" id="IPR010226">
    <property type="entry name" value="NADH_quinone_OxRdtase_chainI"/>
</dbReference>
<dbReference type="NCBIfam" id="TIGR01971">
    <property type="entry name" value="NuoI"/>
    <property type="match status" value="1"/>
</dbReference>
<dbReference type="NCBIfam" id="NF004538">
    <property type="entry name" value="PRK05888.1-4"/>
    <property type="match status" value="1"/>
</dbReference>
<dbReference type="NCBIfam" id="NF004539">
    <property type="entry name" value="PRK05888.1-5"/>
    <property type="match status" value="1"/>
</dbReference>
<dbReference type="PANTHER" id="PTHR10849:SF20">
    <property type="entry name" value="NADH DEHYDROGENASE [UBIQUINONE] IRON-SULFUR PROTEIN 8, MITOCHONDRIAL"/>
    <property type="match status" value="1"/>
</dbReference>
<dbReference type="PANTHER" id="PTHR10849">
    <property type="entry name" value="NADH DEHYDROGENASE UBIQUINONE IRON-SULFUR PROTEIN 8, MITOCHONDRIAL"/>
    <property type="match status" value="1"/>
</dbReference>
<dbReference type="Pfam" id="PF12838">
    <property type="entry name" value="Fer4_7"/>
    <property type="match status" value="1"/>
</dbReference>
<dbReference type="SUPFAM" id="SSF54862">
    <property type="entry name" value="4Fe-4S ferredoxins"/>
    <property type="match status" value="1"/>
</dbReference>
<dbReference type="PROSITE" id="PS00198">
    <property type="entry name" value="4FE4S_FER_1"/>
    <property type="match status" value="2"/>
</dbReference>
<dbReference type="PROSITE" id="PS51379">
    <property type="entry name" value="4FE4S_FER_2"/>
    <property type="match status" value="2"/>
</dbReference>
<keyword id="KW-0002">3D-structure</keyword>
<keyword id="KW-0004">4Fe-4S</keyword>
<keyword id="KW-0249">Electron transport</keyword>
<keyword id="KW-0408">Iron</keyword>
<keyword id="KW-0411">Iron-sulfur</keyword>
<keyword id="KW-0479">Metal-binding</keyword>
<keyword id="KW-0496">Mitochondrion</keyword>
<keyword id="KW-0560">Oxidoreductase</keyword>
<keyword id="KW-1185">Reference proteome</keyword>
<keyword id="KW-0809">Transit peptide</keyword>
<keyword id="KW-1278">Translocase</keyword>
<keyword id="KW-0813">Transport</keyword>
<keyword id="KW-0830">Ubiquinone</keyword>
<name>NDUS8_DROME</name>
<protein>
    <recommendedName>
        <fullName evidence="8 11">NADH dehydrogenase (ubiquinone) 23 kDa subunit</fullName>
        <ecNumber evidence="1">7.1.1.2</ecNumber>
    </recommendedName>
</protein>
<sequence>MSLTMRIFTASRNGQRLFGSHGARLLAAQRAEPKDIVEVPKGYVYVNNKELSMEFADITDRAASTMFFGELLRGFAVTLAHIFKEPATINYPFEKGPLSPRFRGEHALRRYPSGEERCIACKLCEAICPAQAITIEAEERADGSRRTTRYDIDMTKCIYCGFCQEACPVDAIVEGPNFEFSTETHEELLYNKEKLLCNGDKWESEIASNLQADHLYR</sequence>
<proteinExistence type="evidence at protein level"/>
<gene>
    <name evidence="8 13" type="primary">ND-23</name>
    <name evidence="7" type="synonym">dNDUFS8</name>
    <name evidence="13" type="synonym">NUIM</name>
    <name evidence="13" type="ORF">CG3944</name>
</gene>
<accession>Q9VF27</accession>
<accession>Q8SZF2</accession>